<protein>
    <recommendedName>
        <fullName evidence="1">Small ribosomal subunit protein uS7</fullName>
    </recommendedName>
    <alternativeName>
        <fullName>30S ribosomal protein S7</fullName>
    </alternativeName>
</protein>
<comment type="function">
    <text evidence="1">One of the primary rRNA binding proteins, it binds directly to 16S rRNA where it nucleates assembly of the head domain of the 30S subunit. Is located at the subunit interface close to the decoding center.</text>
</comment>
<comment type="subunit">
    <text evidence="1 2">Part of the 30S ribosomal subunit.</text>
</comment>
<comment type="similarity">
    <text evidence="1">Belongs to the universal ribosomal protein uS7 family.</text>
</comment>
<gene>
    <name evidence="1" type="primary">rps7</name>
    <name type="ordered locus">PF1558</name>
</gene>
<sequence>MAKPLNERFFIPHEIKVMGRWSTEDVEVRDPSLKPYINLEPRLLPHTHGRHAKKHFGKANVHIVERLINKIMRSGGSHYKVAGHFMRREHRSLNSKKVKAYEVVKEAFKIIEQRTGKNPIQVLVWAIENAAPREDTTSVMFGGIRYHVAVDISPMRRLDVALRNIALGASAKCYRNKMSFAEALAEEIILAANKDPKSYAYSKKLEIERIAESSR</sequence>
<keyword id="KW-0002">3D-structure</keyword>
<keyword id="KW-1185">Reference proteome</keyword>
<keyword id="KW-0687">Ribonucleoprotein</keyword>
<keyword id="KW-0689">Ribosomal protein</keyword>
<keyword id="KW-0694">RNA-binding</keyword>
<keyword id="KW-0699">rRNA-binding</keyword>
<proteinExistence type="evidence at protein level"/>
<name>RS7_PYRFU</name>
<feature type="chain" id="PRO_0000124409" description="Small ribosomal subunit protein uS7">
    <location>
        <begin position="1"/>
        <end position="215"/>
    </location>
</feature>
<organism>
    <name type="scientific">Pyrococcus furiosus (strain ATCC 43587 / DSM 3638 / JCM 8422 / Vc1)</name>
    <dbReference type="NCBI Taxonomy" id="186497"/>
    <lineage>
        <taxon>Archaea</taxon>
        <taxon>Methanobacteriati</taxon>
        <taxon>Methanobacteriota</taxon>
        <taxon>Thermococci</taxon>
        <taxon>Thermococcales</taxon>
        <taxon>Thermococcaceae</taxon>
        <taxon>Pyrococcus</taxon>
    </lineage>
</organism>
<accession>Q8U0M8</accession>
<dbReference type="EMBL" id="AE009950">
    <property type="protein sequence ID" value="AAL81682.1"/>
    <property type="molecule type" value="Genomic_DNA"/>
</dbReference>
<dbReference type="PDB" id="4V4N">
    <property type="method" value="EM"/>
    <property type="resolution" value="9.00 A"/>
    <property type="chains" value="H=1-215"/>
</dbReference>
<dbReference type="PDB" id="4V6U">
    <property type="method" value="EM"/>
    <property type="resolution" value="6.60 A"/>
    <property type="chains" value="AH=1-215"/>
</dbReference>
<dbReference type="PDB" id="5JB3">
    <property type="method" value="EM"/>
    <property type="resolution" value="5.34 A"/>
    <property type="chains" value="H=1-215"/>
</dbReference>
<dbReference type="PDB" id="5JBH">
    <property type="method" value="EM"/>
    <property type="resolution" value="5.34 A"/>
    <property type="chains" value="H=1-215"/>
</dbReference>
<dbReference type="PDBsum" id="4V4N"/>
<dbReference type="PDBsum" id="4V6U"/>
<dbReference type="PDBsum" id="5JB3"/>
<dbReference type="PDBsum" id="5JBH"/>
<dbReference type="EMDB" id="EMD-50611"/>
<dbReference type="EMDB" id="EMD-50612"/>
<dbReference type="EMDB" id="EMD-50613"/>
<dbReference type="EMDB" id="EMD-8149"/>
<dbReference type="SMR" id="Q8U0M8"/>
<dbReference type="STRING" id="186497.PF1558"/>
<dbReference type="PaxDb" id="186497-PF1558"/>
<dbReference type="KEGG" id="pfu:PF1558"/>
<dbReference type="PATRIC" id="fig|186497.12.peg.1624"/>
<dbReference type="eggNOG" id="arCOG04254">
    <property type="taxonomic scope" value="Archaea"/>
</dbReference>
<dbReference type="HOGENOM" id="CLU_063975_0_0_2"/>
<dbReference type="OrthoDB" id="45346at2157"/>
<dbReference type="PhylomeDB" id="Q8U0M8"/>
<dbReference type="Proteomes" id="UP000001013">
    <property type="component" value="Chromosome"/>
</dbReference>
<dbReference type="GO" id="GO:0015935">
    <property type="term" value="C:small ribosomal subunit"/>
    <property type="evidence" value="ECO:0007669"/>
    <property type="project" value="InterPro"/>
</dbReference>
<dbReference type="GO" id="GO:0019843">
    <property type="term" value="F:rRNA binding"/>
    <property type="evidence" value="ECO:0007669"/>
    <property type="project" value="UniProtKB-UniRule"/>
</dbReference>
<dbReference type="GO" id="GO:0003735">
    <property type="term" value="F:structural constituent of ribosome"/>
    <property type="evidence" value="ECO:0007669"/>
    <property type="project" value="InterPro"/>
</dbReference>
<dbReference type="GO" id="GO:0006412">
    <property type="term" value="P:translation"/>
    <property type="evidence" value="ECO:0007669"/>
    <property type="project" value="UniProtKB-UniRule"/>
</dbReference>
<dbReference type="CDD" id="cd14867">
    <property type="entry name" value="uS7_Eukaryote"/>
    <property type="match status" value="1"/>
</dbReference>
<dbReference type="Gene3D" id="1.10.455.10">
    <property type="entry name" value="Ribosomal protein S7 domain"/>
    <property type="match status" value="1"/>
</dbReference>
<dbReference type="HAMAP" id="MF_00480_A">
    <property type="entry name" value="Ribosomal_uS7_A"/>
    <property type="match status" value="1"/>
</dbReference>
<dbReference type="InterPro" id="IPR000235">
    <property type="entry name" value="Ribosomal_uS7"/>
</dbReference>
<dbReference type="InterPro" id="IPR026018">
    <property type="entry name" value="Ribosomal_uS7_arc"/>
</dbReference>
<dbReference type="InterPro" id="IPR023798">
    <property type="entry name" value="Ribosomal_uS7_dom"/>
</dbReference>
<dbReference type="InterPro" id="IPR036823">
    <property type="entry name" value="Ribosomal_uS7_dom_sf"/>
</dbReference>
<dbReference type="InterPro" id="IPR005716">
    <property type="entry name" value="Ribosomal_uS7_euk/arc"/>
</dbReference>
<dbReference type="NCBIfam" id="NF003106">
    <property type="entry name" value="PRK04027.1"/>
    <property type="match status" value="1"/>
</dbReference>
<dbReference type="NCBIfam" id="TIGR01028">
    <property type="entry name" value="uS7_euk_arch"/>
    <property type="match status" value="1"/>
</dbReference>
<dbReference type="PANTHER" id="PTHR11205">
    <property type="entry name" value="RIBOSOMAL PROTEIN S7"/>
    <property type="match status" value="1"/>
</dbReference>
<dbReference type="Pfam" id="PF00177">
    <property type="entry name" value="Ribosomal_S7"/>
    <property type="match status" value="1"/>
</dbReference>
<dbReference type="PIRSF" id="PIRSF002122">
    <property type="entry name" value="RPS7p_RPS7a_RPS5e_RPS7o"/>
    <property type="match status" value="1"/>
</dbReference>
<dbReference type="SUPFAM" id="SSF47973">
    <property type="entry name" value="Ribosomal protein S7"/>
    <property type="match status" value="1"/>
</dbReference>
<reference key="1">
    <citation type="journal article" date="1999" name="Genetics">
        <title>Divergence of the hyperthermophilic archaea Pyrococcus furiosus and P. horikoshii inferred from complete genomic sequences.</title>
        <authorList>
            <person name="Maeder D.L."/>
            <person name="Weiss R.B."/>
            <person name="Dunn D.M."/>
            <person name="Cherry J.L."/>
            <person name="Gonzalez J.M."/>
            <person name="DiRuggiero J."/>
            <person name="Robb F.T."/>
        </authorList>
    </citation>
    <scope>NUCLEOTIDE SEQUENCE [LARGE SCALE GENOMIC DNA]</scope>
    <source>
        <strain>ATCC 43587 / DSM 3638 / JCM 8422 / Vc1</strain>
    </source>
</reference>
<reference evidence="3" key="2">
    <citation type="journal article" date="2013" name="Nucleic Acids Res.">
        <title>Promiscuous behaviour of archaeal ribosomal proteins: implications for eukaryotic ribosome evolution.</title>
        <authorList>
            <person name="Armache J.P."/>
            <person name="Anger A.M."/>
            <person name="Marquez V."/>
            <person name="Franckenberg S."/>
            <person name="Frohlich T."/>
            <person name="Villa E."/>
            <person name="Berninghausen O."/>
            <person name="Thomm M."/>
            <person name="Arnold G.J."/>
            <person name="Beckmann R."/>
            <person name="Wilson D.N."/>
        </authorList>
    </citation>
    <scope>STRUCTURE BY ELECTRON MICROSCOPY (6.60 ANGSTROMS) IN THE 70S RIBOSOME</scope>
    <scope>SUBUNIT</scope>
</reference>
<evidence type="ECO:0000255" key="1">
    <source>
        <dbReference type="HAMAP-Rule" id="MF_00480"/>
    </source>
</evidence>
<evidence type="ECO:0000269" key="2">
    <source>
    </source>
</evidence>
<evidence type="ECO:0007744" key="3">
    <source>
        <dbReference type="PDB" id="4V6U"/>
    </source>
</evidence>